<sequence length="111" mass="13046">MISTVSLFWALCVVCIVNMARYFSSLRALLVVLRGCDPLLYQYVDGGGFFTTHGQPNKQMRLVWYIYAQRYRDHHDEEFIRRCERVRRQFLLTSALCGLVVVSLIALMIWH</sequence>
<proteinExistence type="inferred from homology"/>
<name>USPB_SALAR</name>
<reference key="1">
    <citation type="submission" date="2007-11" db="EMBL/GenBank/DDBJ databases">
        <authorList>
            <consortium name="The Salmonella enterica serovar Arizonae Genome Sequencing Project"/>
            <person name="McClelland M."/>
            <person name="Sanderson E.K."/>
            <person name="Porwollik S."/>
            <person name="Spieth J."/>
            <person name="Clifton W.S."/>
            <person name="Fulton R."/>
            <person name="Chunyan W."/>
            <person name="Wollam A."/>
            <person name="Shah N."/>
            <person name="Pepin K."/>
            <person name="Bhonagiri V."/>
            <person name="Nash W."/>
            <person name="Johnson M."/>
            <person name="Thiruvilangam P."/>
            <person name="Wilson R."/>
        </authorList>
    </citation>
    <scope>NUCLEOTIDE SEQUENCE [LARGE SCALE GENOMIC DNA]</scope>
    <source>
        <strain>ATCC BAA-731 / CDC346-86 / RSK2980</strain>
    </source>
</reference>
<accession>A9MM62</accession>
<dbReference type="EMBL" id="CP000880">
    <property type="protein sequence ID" value="ABX23841.1"/>
    <property type="molecule type" value="Genomic_DNA"/>
</dbReference>
<dbReference type="SMR" id="A9MM62"/>
<dbReference type="STRING" id="41514.SARI_04048"/>
<dbReference type="KEGG" id="ses:SARI_04048"/>
<dbReference type="HOGENOM" id="CLU_151816_0_0_6"/>
<dbReference type="Proteomes" id="UP000002084">
    <property type="component" value="Chromosome"/>
</dbReference>
<dbReference type="GO" id="GO:0005886">
    <property type="term" value="C:plasma membrane"/>
    <property type="evidence" value="ECO:0007669"/>
    <property type="project" value="UniProtKB-SubCell"/>
</dbReference>
<dbReference type="HAMAP" id="MF_01088">
    <property type="entry name" value="UspB"/>
    <property type="match status" value="1"/>
</dbReference>
<dbReference type="InterPro" id="IPR019598">
    <property type="entry name" value="Universal_stress_protein_B"/>
</dbReference>
<dbReference type="NCBIfam" id="NF003435">
    <property type="entry name" value="PRK04960.1"/>
    <property type="match status" value="1"/>
</dbReference>
<dbReference type="Pfam" id="PF10625">
    <property type="entry name" value="UspB"/>
    <property type="match status" value="1"/>
</dbReference>
<protein>
    <recommendedName>
        <fullName evidence="1">Universal stress protein B</fullName>
    </recommendedName>
</protein>
<evidence type="ECO:0000255" key="1">
    <source>
        <dbReference type="HAMAP-Rule" id="MF_01088"/>
    </source>
</evidence>
<organism>
    <name type="scientific">Salmonella arizonae (strain ATCC BAA-731 / CDC346-86 / RSK2980)</name>
    <dbReference type="NCBI Taxonomy" id="41514"/>
    <lineage>
        <taxon>Bacteria</taxon>
        <taxon>Pseudomonadati</taxon>
        <taxon>Pseudomonadota</taxon>
        <taxon>Gammaproteobacteria</taxon>
        <taxon>Enterobacterales</taxon>
        <taxon>Enterobacteriaceae</taxon>
        <taxon>Salmonella</taxon>
    </lineage>
</organism>
<gene>
    <name evidence="1" type="primary">uspB</name>
    <name type="ordered locus">SARI_04048</name>
</gene>
<feature type="chain" id="PRO_1000084784" description="Universal stress protein B">
    <location>
        <begin position="1"/>
        <end position="111"/>
    </location>
</feature>
<feature type="transmembrane region" description="Helical" evidence="1">
    <location>
        <begin position="1"/>
        <end position="21"/>
    </location>
</feature>
<feature type="transmembrane region" description="Helical" evidence="1">
    <location>
        <begin position="90"/>
        <end position="110"/>
    </location>
</feature>
<comment type="subcellular location">
    <subcellularLocation>
        <location evidence="1">Cell inner membrane</location>
        <topology evidence="1">Multi-pass membrane protein</topology>
    </subcellularLocation>
</comment>
<comment type="similarity">
    <text evidence="1">Belongs to the universal stress protein B family.</text>
</comment>
<keyword id="KW-0997">Cell inner membrane</keyword>
<keyword id="KW-1003">Cell membrane</keyword>
<keyword id="KW-0472">Membrane</keyword>
<keyword id="KW-1185">Reference proteome</keyword>
<keyword id="KW-0812">Transmembrane</keyword>
<keyword id="KW-1133">Transmembrane helix</keyword>